<name>YCF29_PORPU</name>
<organism>
    <name type="scientific">Porphyra purpurea</name>
    <name type="common">Red seaweed</name>
    <name type="synonym">Ulva purpurea</name>
    <dbReference type="NCBI Taxonomy" id="2787"/>
    <lineage>
        <taxon>Eukaryota</taxon>
        <taxon>Rhodophyta</taxon>
        <taxon>Bangiophyceae</taxon>
        <taxon>Bangiales</taxon>
        <taxon>Bangiaceae</taxon>
        <taxon>Porphyra</taxon>
    </lineage>
</organism>
<proteinExistence type="inferred from homology"/>
<feature type="chain" id="PRO_0000081356" description="Probable transcriptional regulator ycf29">
    <location>
        <begin position="1"/>
        <end position="209"/>
    </location>
</feature>
<feature type="domain" description="Response regulatory" evidence="1">
    <location>
        <begin position="4"/>
        <end position="120"/>
    </location>
</feature>
<feature type="domain" description="HTH luxR-type" evidence="2">
    <location>
        <begin position="139"/>
        <end position="204"/>
    </location>
</feature>
<feature type="modified residue" description="4-aspartylphosphate" evidence="1">
    <location>
        <position position="53"/>
    </location>
</feature>
<reference key="1">
    <citation type="journal article" date="1995" name="Plant Mol. Biol. Rep.">
        <title>Complete nucleotide sequence of the Porphyra purpurea chloroplast genome.</title>
        <authorList>
            <person name="Reith M.E."/>
            <person name="Munholland J."/>
        </authorList>
    </citation>
    <scope>NUCLEOTIDE SEQUENCE [LARGE SCALE GENOMIC DNA]</scope>
    <source>
        <strain>Avonport</strain>
    </source>
</reference>
<comment type="subcellular location">
    <subcellularLocation>
        <location>Plastid</location>
        <location>Chloroplast</location>
    </subcellularLocation>
</comment>
<accession>P51343</accession>
<geneLocation type="chloroplast"/>
<protein>
    <recommendedName>
        <fullName>Probable transcriptional regulator ycf29</fullName>
    </recommendedName>
</protein>
<keyword id="KW-0150">Chloroplast</keyword>
<keyword id="KW-0238">DNA-binding</keyword>
<keyword id="KW-0597">Phosphoprotein</keyword>
<keyword id="KW-0934">Plastid</keyword>
<keyword id="KW-0804">Transcription</keyword>
<keyword id="KW-0805">Transcription regulation</keyword>
<keyword id="KW-0902">Two-component regulatory system</keyword>
<sequence>MSYNLMLVENDTVLSKAIQEYLIDQGFNVDIALNGLEAFQLANKYKFDLIISDIIMPIIDGYELLEKLRKIDKLAKIPVIFLTAKGMTKDRIKGYNMGCYGYLSKPFDPEELVSLIKNLIYRDSLNSQNLKKQNSDEIPLFQLLYLTPREKSILNLVIDGLTNKEIAVILDTSIRNVEKYVSRLLQKTNTRNRTLLVKYSIKNNLLNKI</sequence>
<dbReference type="EMBL" id="U38804">
    <property type="protein sequence ID" value="AAC08229.1"/>
    <property type="molecule type" value="Genomic_DNA"/>
</dbReference>
<dbReference type="PIR" id="S73264">
    <property type="entry name" value="S73264"/>
</dbReference>
<dbReference type="RefSeq" id="NP_053953.1">
    <property type="nucleotide sequence ID" value="NC_000925.1"/>
</dbReference>
<dbReference type="SMR" id="P51343"/>
<dbReference type="GeneID" id="809979"/>
<dbReference type="GO" id="GO:0009507">
    <property type="term" value="C:chloroplast"/>
    <property type="evidence" value="ECO:0007669"/>
    <property type="project" value="UniProtKB-SubCell"/>
</dbReference>
<dbReference type="GO" id="GO:0003677">
    <property type="term" value="F:DNA binding"/>
    <property type="evidence" value="ECO:0007669"/>
    <property type="project" value="UniProtKB-KW"/>
</dbReference>
<dbReference type="GO" id="GO:0000160">
    <property type="term" value="P:phosphorelay signal transduction system"/>
    <property type="evidence" value="ECO:0007669"/>
    <property type="project" value="UniProtKB-KW"/>
</dbReference>
<dbReference type="GO" id="GO:0006355">
    <property type="term" value="P:regulation of DNA-templated transcription"/>
    <property type="evidence" value="ECO:0007669"/>
    <property type="project" value="InterPro"/>
</dbReference>
<dbReference type="CDD" id="cd06170">
    <property type="entry name" value="LuxR_C_like"/>
    <property type="match status" value="1"/>
</dbReference>
<dbReference type="CDD" id="cd19927">
    <property type="entry name" value="REC_Ycf29"/>
    <property type="match status" value="1"/>
</dbReference>
<dbReference type="Gene3D" id="3.40.50.2300">
    <property type="match status" value="1"/>
</dbReference>
<dbReference type="Gene3D" id="1.10.10.10">
    <property type="entry name" value="Winged helix-like DNA-binding domain superfamily/Winged helix DNA-binding domain"/>
    <property type="match status" value="1"/>
</dbReference>
<dbReference type="InterPro" id="IPR050595">
    <property type="entry name" value="Bact_response_regulator"/>
</dbReference>
<dbReference type="InterPro" id="IPR011006">
    <property type="entry name" value="CheY-like_superfamily"/>
</dbReference>
<dbReference type="InterPro" id="IPR016032">
    <property type="entry name" value="Sig_transdc_resp-reg_C-effctor"/>
</dbReference>
<dbReference type="InterPro" id="IPR001789">
    <property type="entry name" value="Sig_transdc_resp-reg_receiver"/>
</dbReference>
<dbReference type="InterPro" id="IPR000792">
    <property type="entry name" value="Tscrpt_reg_LuxR_C"/>
</dbReference>
<dbReference type="InterPro" id="IPR036388">
    <property type="entry name" value="WH-like_DNA-bd_sf"/>
</dbReference>
<dbReference type="PANTHER" id="PTHR44591:SF3">
    <property type="entry name" value="RESPONSE REGULATORY DOMAIN-CONTAINING PROTEIN"/>
    <property type="match status" value="1"/>
</dbReference>
<dbReference type="PANTHER" id="PTHR44591">
    <property type="entry name" value="STRESS RESPONSE REGULATOR PROTEIN 1"/>
    <property type="match status" value="1"/>
</dbReference>
<dbReference type="Pfam" id="PF00196">
    <property type="entry name" value="GerE"/>
    <property type="match status" value="1"/>
</dbReference>
<dbReference type="Pfam" id="PF00072">
    <property type="entry name" value="Response_reg"/>
    <property type="match status" value="1"/>
</dbReference>
<dbReference type="PRINTS" id="PR00038">
    <property type="entry name" value="HTHLUXR"/>
</dbReference>
<dbReference type="SMART" id="SM00421">
    <property type="entry name" value="HTH_LUXR"/>
    <property type="match status" value="1"/>
</dbReference>
<dbReference type="SMART" id="SM00448">
    <property type="entry name" value="REC"/>
    <property type="match status" value="1"/>
</dbReference>
<dbReference type="SUPFAM" id="SSF46894">
    <property type="entry name" value="C-terminal effector domain of the bipartite response regulators"/>
    <property type="match status" value="1"/>
</dbReference>
<dbReference type="SUPFAM" id="SSF52172">
    <property type="entry name" value="CheY-like"/>
    <property type="match status" value="1"/>
</dbReference>
<dbReference type="PROSITE" id="PS50043">
    <property type="entry name" value="HTH_LUXR_2"/>
    <property type="match status" value="1"/>
</dbReference>
<dbReference type="PROSITE" id="PS50110">
    <property type="entry name" value="RESPONSE_REGULATORY"/>
    <property type="match status" value="1"/>
</dbReference>
<gene>
    <name type="primary">ycf29</name>
</gene>
<evidence type="ECO:0000255" key="1">
    <source>
        <dbReference type="PROSITE-ProRule" id="PRU00169"/>
    </source>
</evidence>
<evidence type="ECO:0000255" key="2">
    <source>
        <dbReference type="PROSITE-ProRule" id="PRU00411"/>
    </source>
</evidence>